<geneLocation type="plasmid">
    <name>pRiA4b</name>
</geneLocation>
<feature type="chain" id="PRO_0000054722" description="Agropine synthesis reductase">
    <location>
        <begin position="1"/>
        <end position="430"/>
    </location>
</feature>
<feature type="active site" description="Proton acceptor" evidence="2">
    <location>
        <position position="346"/>
    </location>
</feature>
<feature type="binding site" evidence="1">
    <location>
        <begin position="203"/>
        <end position="227"/>
    </location>
    <ligand>
        <name>NAD(+)</name>
        <dbReference type="ChEBI" id="CHEBI:57540"/>
    </ligand>
</feature>
<feature type="binding site" evidence="1">
    <location>
        <position position="333"/>
    </location>
    <ligand>
        <name>substrate</name>
    </ligand>
</feature>
<name>MAS11_RHIRH</name>
<proteinExistence type="inferred from homology"/>
<sequence length="430" mass="47722">MPLPRAYLGTAQPPASVKEFYFVRHGATDLNEKEMHLQGEKHWGVQGAGTNIGLNGTGKRQAVLAGNVLRKLPIGSVVCSPLLRAIQTALIANIGFLCFDIDEDLKERDFGKHEGGYGPLKMFEDNYPDCEDTEMFSLRVAKALTHAKNENTLFVSHGGVLRVIAALLGVDLTKEHTNNGRVLHFRRGFSHWTVEIHQSPVILVSGSNRGVGKAIAEDLIAHGYRLSLGARKVKDLEVAFGPQDEWLHYARFDAEDHGTMAAWVTAAVEKFGRIDGLVNNAGYGEPVNLDKHVDYQRFHLQWYINCVAPLRMTELCLPHLYETGSGRIVNINSMSGQRVLNPLVGYNMTKHALGGLTKTTQHVGWDRRCAAIDICLGFVATDMSAWTDLIASKDMIQPEDIAKLVREAIERPNRAYVPRSEVMCIKEATR</sequence>
<gene>
    <name type="primary">mas1</name>
</gene>
<accession>P27874</accession>
<organism>
    <name type="scientific">Rhizobium rhizogenes</name>
    <name type="common">Agrobacterium rhizogenes</name>
    <dbReference type="NCBI Taxonomy" id="359"/>
    <lineage>
        <taxon>Bacteria</taxon>
        <taxon>Pseudomonadati</taxon>
        <taxon>Pseudomonadota</taxon>
        <taxon>Alphaproteobacteria</taxon>
        <taxon>Hyphomicrobiales</taxon>
        <taxon>Rhizobiaceae</taxon>
        <taxon>Rhizobium/Agrobacterium group</taxon>
        <taxon>Rhizobium</taxon>
    </lineage>
</organism>
<keyword id="KW-0560">Oxidoreductase</keyword>
<keyword id="KW-0614">Plasmid</keyword>
<dbReference type="EC" id="1.-.-.-"/>
<dbReference type="EMBL" id="X51338">
    <property type="protein sequence ID" value="CAA35718.1"/>
    <property type="molecule type" value="Genomic_DNA"/>
</dbReference>
<dbReference type="PIR" id="JQ1050">
    <property type="entry name" value="JQ1050"/>
</dbReference>
<dbReference type="SMR" id="P27874"/>
<dbReference type="eggNOG" id="COG1028">
    <property type="taxonomic scope" value="Bacteria"/>
</dbReference>
<dbReference type="UniPathway" id="UPA00736"/>
<dbReference type="GO" id="GO:0016491">
    <property type="term" value="F:oxidoreductase activity"/>
    <property type="evidence" value="ECO:0007669"/>
    <property type="project" value="UniProtKB-KW"/>
</dbReference>
<dbReference type="GO" id="GO:0006629">
    <property type="term" value="P:lipid metabolic process"/>
    <property type="evidence" value="ECO:0007669"/>
    <property type="project" value="UniProtKB-ARBA"/>
</dbReference>
<dbReference type="GO" id="GO:0032787">
    <property type="term" value="P:monocarboxylic acid metabolic process"/>
    <property type="evidence" value="ECO:0007669"/>
    <property type="project" value="UniProtKB-ARBA"/>
</dbReference>
<dbReference type="CDD" id="cd07067">
    <property type="entry name" value="HP_PGM_like"/>
    <property type="match status" value="1"/>
</dbReference>
<dbReference type="Gene3D" id="3.40.50.720">
    <property type="entry name" value="NAD(P)-binding Rossmann-like Domain"/>
    <property type="match status" value="1"/>
</dbReference>
<dbReference type="Gene3D" id="3.40.50.1240">
    <property type="entry name" value="Phosphoglycerate mutase-like"/>
    <property type="match status" value="1"/>
</dbReference>
<dbReference type="InterPro" id="IPR013078">
    <property type="entry name" value="His_Pase_superF_clade-1"/>
</dbReference>
<dbReference type="InterPro" id="IPR029033">
    <property type="entry name" value="His_PPase_superfam"/>
</dbReference>
<dbReference type="InterPro" id="IPR015845">
    <property type="entry name" value="Mas1"/>
</dbReference>
<dbReference type="InterPro" id="IPR036291">
    <property type="entry name" value="NAD(P)-bd_dom_sf"/>
</dbReference>
<dbReference type="InterPro" id="IPR020904">
    <property type="entry name" value="Sc_DH/Rdtase_CS"/>
</dbReference>
<dbReference type="InterPro" id="IPR050259">
    <property type="entry name" value="SDR"/>
</dbReference>
<dbReference type="InterPro" id="IPR002347">
    <property type="entry name" value="SDR_fam"/>
</dbReference>
<dbReference type="PANTHER" id="PTHR42879">
    <property type="entry name" value="3-OXOACYL-(ACYL-CARRIER-PROTEIN) REDUCTASE"/>
    <property type="match status" value="1"/>
</dbReference>
<dbReference type="PANTHER" id="PTHR42879:SF2">
    <property type="entry name" value="3-OXOACYL-[ACYL-CARRIER-PROTEIN] REDUCTASE FABG"/>
    <property type="match status" value="1"/>
</dbReference>
<dbReference type="Pfam" id="PF00106">
    <property type="entry name" value="adh_short"/>
    <property type="match status" value="1"/>
</dbReference>
<dbReference type="Pfam" id="PF00300">
    <property type="entry name" value="His_Phos_1"/>
    <property type="match status" value="1"/>
</dbReference>
<dbReference type="PIRSF" id="PIRSF036951">
    <property type="entry name" value="Mas1"/>
    <property type="match status" value="1"/>
</dbReference>
<dbReference type="PRINTS" id="PR00081">
    <property type="entry name" value="GDHRDH"/>
</dbReference>
<dbReference type="PRINTS" id="PR00080">
    <property type="entry name" value="SDRFAMILY"/>
</dbReference>
<dbReference type="SMART" id="SM00855">
    <property type="entry name" value="PGAM"/>
    <property type="match status" value="1"/>
</dbReference>
<dbReference type="SUPFAM" id="SSF51735">
    <property type="entry name" value="NAD(P)-binding Rossmann-fold domains"/>
    <property type="match status" value="1"/>
</dbReference>
<dbReference type="SUPFAM" id="SSF53254">
    <property type="entry name" value="Phosphoglycerate mutase-like"/>
    <property type="match status" value="1"/>
</dbReference>
<dbReference type="PROSITE" id="PS00061">
    <property type="entry name" value="ADH_SHORT"/>
    <property type="match status" value="1"/>
</dbReference>
<reference key="1">
    <citation type="journal article" date="1991" name="Plasmid">
        <title>Organization of the agropine synthesis region of the T-DNA of the Ri plasmid from Agrobacterium rhizogenes.</title>
        <authorList>
            <person name="Bouchez D."/>
            <person name="Tourneur J."/>
        </authorList>
    </citation>
    <scope>NUCLEOTIDE SEQUENCE [GENOMIC DNA]</scope>
    <source>
        <strain>A4</strain>
    </source>
</reference>
<evidence type="ECO:0000250" key="1"/>
<evidence type="ECO:0000255" key="2">
    <source>
        <dbReference type="PROSITE-ProRule" id="PRU10001"/>
    </source>
</evidence>
<evidence type="ECO:0000305" key="3"/>
<protein>
    <recommendedName>
        <fullName>Agropine synthesis reductase</fullName>
        <ecNumber>1.-.-.-</ecNumber>
    </recommendedName>
</protein>
<comment type="function">
    <text>Reduces deoxy-fructosyl-glutamine to mannopine.</text>
</comment>
<comment type="pathway">
    <text>Opine metabolism; mannopine biosynthesis.</text>
</comment>
<comment type="similarity">
    <text evidence="3">Belongs to the short-chain dehydrogenases/reductases (SDR) family.</text>
</comment>